<organism>
    <name type="scientific">Kyrpidia tusciae (strain DSM 2912 / NBRC 15312 / T2)</name>
    <name type="common">Bacillus tusciae</name>
    <dbReference type="NCBI Taxonomy" id="562970"/>
    <lineage>
        <taxon>Bacteria</taxon>
        <taxon>Bacillati</taxon>
        <taxon>Bacillota</taxon>
        <taxon>Bacilli</taxon>
        <taxon>Bacillales</taxon>
        <taxon>Alicyclobacillaceae</taxon>
        <taxon>Kyrpidia</taxon>
    </lineage>
</organism>
<dbReference type="EC" id="2.3.1.204" evidence="1"/>
<dbReference type="EMBL" id="CP002017">
    <property type="protein sequence ID" value="ADG05525.1"/>
    <property type="molecule type" value="Genomic_DNA"/>
</dbReference>
<dbReference type="RefSeq" id="WP_013074817.1">
    <property type="nucleotide sequence ID" value="NC_014098.1"/>
</dbReference>
<dbReference type="SMR" id="D5WVB5"/>
<dbReference type="STRING" id="562970.Btus_0765"/>
<dbReference type="KEGG" id="bts:Btus_0765"/>
<dbReference type="eggNOG" id="COG0095">
    <property type="taxonomic scope" value="Bacteria"/>
</dbReference>
<dbReference type="HOGENOM" id="CLU_084176_0_0_9"/>
<dbReference type="OrthoDB" id="2080934at2"/>
<dbReference type="Proteomes" id="UP000002368">
    <property type="component" value="Chromosome"/>
</dbReference>
<dbReference type="GO" id="GO:0033819">
    <property type="term" value="F:lipoyl(octanoyl) transferase activity"/>
    <property type="evidence" value="ECO:0007669"/>
    <property type="project" value="InterPro"/>
</dbReference>
<dbReference type="GO" id="GO:0009107">
    <property type="term" value="P:lipoate biosynthetic process"/>
    <property type="evidence" value="ECO:0007669"/>
    <property type="project" value="UniProtKB-UniRule"/>
</dbReference>
<dbReference type="GO" id="GO:0036211">
    <property type="term" value="P:protein modification process"/>
    <property type="evidence" value="ECO:0007669"/>
    <property type="project" value="InterPro"/>
</dbReference>
<dbReference type="CDD" id="cd16443">
    <property type="entry name" value="LplA"/>
    <property type="match status" value="1"/>
</dbReference>
<dbReference type="Gene3D" id="3.30.930.10">
    <property type="entry name" value="Bira Bifunctional Protein, Domain 2"/>
    <property type="match status" value="1"/>
</dbReference>
<dbReference type="HAMAP" id="MF_02119">
    <property type="entry name" value="LipL"/>
    <property type="match status" value="1"/>
</dbReference>
<dbReference type="InterPro" id="IPR045864">
    <property type="entry name" value="aa-tRNA-synth_II/BPL/LPL"/>
</dbReference>
<dbReference type="InterPro" id="IPR004143">
    <property type="entry name" value="BPL_LPL_catalytic"/>
</dbReference>
<dbReference type="InterPro" id="IPR024897">
    <property type="entry name" value="LipL"/>
</dbReference>
<dbReference type="InterPro" id="IPR050664">
    <property type="entry name" value="Octanoyltrans_LipM/LipL"/>
</dbReference>
<dbReference type="PANTHER" id="PTHR43679:SF2">
    <property type="entry name" value="OCTANOYL-[GCVH]:PROTEIN N-OCTANOYLTRANSFERASE"/>
    <property type="match status" value="1"/>
</dbReference>
<dbReference type="PANTHER" id="PTHR43679">
    <property type="entry name" value="OCTANOYLTRANSFERASE LIPM-RELATED"/>
    <property type="match status" value="1"/>
</dbReference>
<dbReference type="Pfam" id="PF21948">
    <property type="entry name" value="LplA-B_cat"/>
    <property type="match status" value="1"/>
</dbReference>
<dbReference type="SUPFAM" id="SSF55681">
    <property type="entry name" value="Class II aaRS and biotin synthetases"/>
    <property type="match status" value="1"/>
</dbReference>
<dbReference type="PROSITE" id="PS51733">
    <property type="entry name" value="BPL_LPL_CATALYTIC"/>
    <property type="match status" value="1"/>
</dbReference>
<evidence type="ECO:0000255" key="1">
    <source>
        <dbReference type="HAMAP-Rule" id="MF_02119"/>
    </source>
</evidence>
<evidence type="ECO:0000255" key="2">
    <source>
        <dbReference type="PROSITE-ProRule" id="PRU01067"/>
    </source>
</evidence>
<evidence type="ECO:0000256" key="3">
    <source>
        <dbReference type="SAM" id="MobiDB-lite"/>
    </source>
</evidence>
<accession>D5WVB5</accession>
<feature type="chain" id="PRO_0000410837" description="Octanoyl-[GcvH]:protein N-octanoyltransferase">
    <location>
        <begin position="1"/>
        <end position="288"/>
    </location>
</feature>
<feature type="domain" description="BPL/LPL catalytic" evidence="2">
    <location>
        <begin position="44"/>
        <end position="253"/>
    </location>
</feature>
<feature type="region of interest" description="Disordered" evidence="3">
    <location>
        <begin position="269"/>
        <end position="288"/>
    </location>
</feature>
<feature type="compositionally biased region" description="Basic and acidic residues" evidence="3">
    <location>
        <begin position="272"/>
        <end position="288"/>
    </location>
</feature>
<feature type="active site" description="Acyl-thioester intermediate" evidence="1">
    <location>
        <position position="148"/>
    </location>
</feature>
<feature type="site" description="Lowers pKa of active site Cys" evidence="1">
    <location>
        <position position="160"/>
    </location>
</feature>
<gene>
    <name evidence="1" type="primary">lipL</name>
    <name type="ordered locus">Btus_0765</name>
</gene>
<reference key="1">
    <citation type="submission" date="2010-04" db="EMBL/GenBank/DDBJ databases">
        <title>The complete genome of Bacillus tusciae DSM 2912.</title>
        <authorList>
            <consortium name="US DOE Joint Genome Institute (JGI-PGF)"/>
            <person name="Lucas S."/>
            <person name="Copeland A."/>
            <person name="Lapidus A."/>
            <person name="Glavina del Rio T."/>
            <person name="Dalin E."/>
            <person name="Tice H."/>
            <person name="Bruce D."/>
            <person name="Goodwin L."/>
            <person name="Pitluck S."/>
            <person name="Kyrpides N."/>
            <person name="Mavromatis K."/>
            <person name="Ivanova N."/>
            <person name="Ovchinnikova G."/>
            <person name="Chertkov O."/>
            <person name="Brettin T."/>
            <person name="Detter J.C."/>
            <person name="Han C."/>
            <person name="Larimer F."/>
            <person name="Land M."/>
            <person name="Hauser L."/>
            <person name="Markowitz V."/>
            <person name="Cheng J.-F."/>
            <person name="Hugenholtz P."/>
            <person name="Woyke T."/>
            <person name="Wu D."/>
            <person name="Pukall R."/>
            <person name="Schneider S."/>
            <person name="Wahrenburg C."/>
            <person name="Klenk H.-P."/>
            <person name="Eisen J.A."/>
        </authorList>
    </citation>
    <scope>NUCLEOTIDE SEQUENCE [LARGE SCALE GENOMIC DNA]</scope>
    <source>
        <strain>DSM 2912 / NBRC 15312 / T2</strain>
    </source>
</reference>
<proteinExistence type="inferred from homology"/>
<sequence length="288" mass="31886">MKQVEWDDTLWSRWPTWRLVVEEQPGTIEEKIARDQAMGRRVAAGGPPTFRLWVNDPCLVVSRRDIVQGLRRGGDPPREVDGLPIRVRSSGGTAVPHGPGVLQFSLVVPRMDRVGMEEVYRTLCRPVEAVLGQRGWRAEFGRVAGSFCDGAHNLVVNGRKIAGTSQSWKGGLAVPGSRNRGYILAHGTLWVRVDPEQAADWLNDFYEQTIGERPIRARASTSLHLLPGGEGVDVRQVIAETANVLESAMGPQVKLERVRALTDEEISWGREGASETDPRRVAYGVDRP</sequence>
<comment type="function">
    <text evidence="1">Catalyzes the amidotransfer (transamidation) of the octanoyl moiety from octanoyl-GcvH to the lipoyl domain of the E2 subunit of lipoate-dependent enzymes.</text>
</comment>
<comment type="catalytic activity">
    <reaction evidence="1">
        <text>N(6)-octanoyl-L-lysyl-[glycine-cleavage complex H protein] + L-lysyl-[lipoyl-carrier protein] = N(6)-octanoyl-L-lysyl-[lipoyl-carrier protein] + L-lysyl-[glycine-cleavage complex H protein]</text>
        <dbReference type="Rhea" id="RHEA:20213"/>
        <dbReference type="Rhea" id="RHEA-COMP:10500"/>
        <dbReference type="Rhea" id="RHEA-COMP:10501"/>
        <dbReference type="Rhea" id="RHEA-COMP:10503"/>
        <dbReference type="Rhea" id="RHEA-COMP:10504"/>
        <dbReference type="ChEBI" id="CHEBI:29969"/>
        <dbReference type="ChEBI" id="CHEBI:78809"/>
        <dbReference type="EC" id="2.3.1.204"/>
    </reaction>
</comment>
<comment type="pathway">
    <text evidence="1">Protein modification; protein lipoylation via endogenous pathway; protein N(6)-(lipoyl)lysine from octanoyl-[acyl-carrier-protein].</text>
</comment>
<comment type="miscellaneous">
    <text evidence="1">The reaction proceeds via a thioester-linked acyl-enzyme intermediate.</text>
</comment>
<comment type="similarity">
    <text evidence="1">Belongs to the octanoyltransferase LipL family.</text>
</comment>
<name>LIPL_KYRT2</name>
<keyword id="KW-0012">Acyltransferase</keyword>
<keyword id="KW-0808">Transferase</keyword>
<protein>
    <recommendedName>
        <fullName evidence="1">Octanoyl-[GcvH]:protein N-octanoyltransferase</fullName>
        <ecNumber evidence="1">2.3.1.204</ecNumber>
    </recommendedName>
    <alternativeName>
        <fullName evidence="1">Octanoyl-[GcvH]:E2 amidotransferase</fullName>
    </alternativeName>
</protein>